<organism>
    <name type="scientific">Streptococcus equi subsp. zooepidemicus (strain H70)</name>
    <dbReference type="NCBI Taxonomy" id="553483"/>
    <lineage>
        <taxon>Bacteria</taxon>
        <taxon>Bacillati</taxon>
        <taxon>Bacillota</taxon>
        <taxon>Bacilli</taxon>
        <taxon>Lactobacillales</taxon>
        <taxon>Streptococcaceae</taxon>
        <taxon>Streptococcus</taxon>
    </lineage>
</organism>
<accession>C0MCB0</accession>
<dbReference type="EMBL" id="FM204884">
    <property type="protein sequence ID" value="CAW97644.1"/>
    <property type="molecule type" value="Genomic_DNA"/>
</dbReference>
<dbReference type="SMR" id="C0MCB0"/>
<dbReference type="KEGG" id="seq:SZO_00500"/>
<dbReference type="eggNOG" id="COG0087">
    <property type="taxonomic scope" value="Bacteria"/>
</dbReference>
<dbReference type="HOGENOM" id="CLU_044142_4_1_9"/>
<dbReference type="Proteomes" id="UP000001368">
    <property type="component" value="Chromosome"/>
</dbReference>
<dbReference type="GO" id="GO:0022625">
    <property type="term" value="C:cytosolic large ribosomal subunit"/>
    <property type="evidence" value="ECO:0007669"/>
    <property type="project" value="TreeGrafter"/>
</dbReference>
<dbReference type="GO" id="GO:0019843">
    <property type="term" value="F:rRNA binding"/>
    <property type="evidence" value="ECO:0007669"/>
    <property type="project" value="UniProtKB-UniRule"/>
</dbReference>
<dbReference type="GO" id="GO:0003735">
    <property type="term" value="F:structural constituent of ribosome"/>
    <property type="evidence" value="ECO:0007669"/>
    <property type="project" value="InterPro"/>
</dbReference>
<dbReference type="GO" id="GO:0006412">
    <property type="term" value="P:translation"/>
    <property type="evidence" value="ECO:0007669"/>
    <property type="project" value="UniProtKB-UniRule"/>
</dbReference>
<dbReference type="FunFam" id="2.40.30.10:FF:000004">
    <property type="entry name" value="50S ribosomal protein L3"/>
    <property type="match status" value="1"/>
</dbReference>
<dbReference type="FunFam" id="3.30.160.810:FF:000002">
    <property type="entry name" value="50S ribosomal protein L3"/>
    <property type="match status" value="1"/>
</dbReference>
<dbReference type="Gene3D" id="3.30.160.810">
    <property type="match status" value="1"/>
</dbReference>
<dbReference type="Gene3D" id="2.40.30.10">
    <property type="entry name" value="Translation factors"/>
    <property type="match status" value="1"/>
</dbReference>
<dbReference type="HAMAP" id="MF_01325_B">
    <property type="entry name" value="Ribosomal_uL3_B"/>
    <property type="match status" value="1"/>
</dbReference>
<dbReference type="InterPro" id="IPR000597">
    <property type="entry name" value="Ribosomal_uL3"/>
</dbReference>
<dbReference type="InterPro" id="IPR019927">
    <property type="entry name" value="Ribosomal_uL3_bac/org-type"/>
</dbReference>
<dbReference type="InterPro" id="IPR019926">
    <property type="entry name" value="Ribosomal_uL3_CS"/>
</dbReference>
<dbReference type="InterPro" id="IPR009000">
    <property type="entry name" value="Transl_B-barrel_sf"/>
</dbReference>
<dbReference type="NCBIfam" id="TIGR03625">
    <property type="entry name" value="L3_bact"/>
    <property type="match status" value="1"/>
</dbReference>
<dbReference type="PANTHER" id="PTHR11229">
    <property type="entry name" value="50S RIBOSOMAL PROTEIN L3"/>
    <property type="match status" value="1"/>
</dbReference>
<dbReference type="PANTHER" id="PTHR11229:SF16">
    <property type="entry name" value="LARGE RIBOSOMAL SUBUNIT PROTEIN UL3C"/>
    <property type="match status" value="1"/>
</dbReference>
<dbReference type="Pfam" id="PF00297">
    <property type="entry name" value="Ribosomal_L3"/>
    <property type="match status" value="1"/>
</dbReference>
<dbReference type="SUPFAM" id="SSF50447">
    <property type="entry name" value="Translation proteins"/>
    <property type="match status" value="1"/>
</dbReference>
<dbReference type="PROSITE" id="PS00474">
    <property type="entry name" value="RIBOSOMAL_L3"/>
    <property type="match status" value="1"/>
</dbReference>
<reference key="1">
    <citation type="journal article" date="2009" name="PLoS Pathog.">
        <title>Genomic evidence for the evolution of Streptococcus equi: host restriction, increased virulence, and genetic exchange with human pathogens.</title>
        <authorList>
            <person name="Holden M.T.G."/>
            <person name="Heather Z."/>
            <person name="Paillot R."/>
            <person name="Steward K.F."/>
            <person name="Webb K."/>
            <person name="Ainslie F."/>
            <person name="Jourdan T."/>
            <person name="Bason N.C."/>
            <person name="Holroyd N.E."/>
            <person name="Mungall K."/>
            <person name="Quail M.A."/>
            <person name="Sanders M."/>
            <person name="Simmonds M."/>
            <person name="Willey D."/>
            <person name="Brooks K."/>
            <person name="Aanensen D.M."/>
            <person name="Spratt B.G."/>
            <person name="Jolley K.A."/>
            <person name="Maiden M.C.J."/>
            <person name="Kehoe M."/>
            <person name="Chanter N."/>
            <person name="Bentley S.D."/>
            <person name="Robinson C."/>
            <person name="Maskell D.J."/>
            <person name="Parkhill J."/>
            <person name="Waller A.S."/>
        </authorList>
    </citation>
    <scope>NUCLEOTIDE SEQUENCE [LARGE SCALE GENOMIC DNA]</scope>
    <source>
        <strain>H70</strain>
    </source>
</reference>
<keyword id="KW-0687">Ribonucleoprotein</keyword>
<keyword id="KW-0689">Ribosomal protein</keyword>
<keyword id="KW-0694">RNA-binding</keyword>
<keyword id="KW-0699">rRNA-binding</keyword>
<protein>
    <recommendedName>
        <fullName evidence="1">Large ribosomal subunit protein uL3</fullName>
    </recommendedName>
    <alternativeName>
        <fullName evidence="3">50S ribosomal protein L3</fullName>
    </alternativeName>
</protein>
<name>RL3_STRS7</name>
<evidence type="ECO:0000255" key="1">
    <source>
        <dbReference type="HAMAP-Rule" id="MF_01325"/>
    </source>
</evidence>
<evidence type="ECO:0000256" key="2">
    <source>
        <dbReference type="SAM" id="MobiDB-lite"/>
    </source>
</evidence>
<evidence type="ECO:0000305" key="3"/>
<sequence length="208" mass="22376">MTKGILGKKVGMTQIFTESGEFIPVTVIEATPNVVLQVKTVETDGYEAIQVGFDDKREVLSNKPAKGHVAKANTAPKRFIREFKNIEGLEVGAEITVDIFAAGDVVDVTGTSKGKGFQGVIKRHGQSRGPMAHGSRYHRRPGSMGPVAPNRVFKNKHLAGRMGGNRVTIQNLEIVQVIPEKNVILIKGNVPGAKKSLITIKSAVKAAK</sequence>
<comment type="function">
    <text evidence="1">One of the primary rRNA binding proteins, it binds directly near the 3'-end of the 23S rRNA, where it nucleates assembly of the 50S subunit.</text>
</comment>
<comment type="subunit">
    <text evidence="1">Part of the 50S ribosomal subunit. Forms a cluster with proteins L14 and L19.</text>
</comment>
<comment type="similarity">
    <text evidence="1">Belongs to the universal ribosomal protein uL3 family.</text>
</comment>
<gene>
    <name evidence="1" type="primary">rplC</name>
    <name type="ordered locus">SZO_00500</name>
</gene>
<proteinExistence type="inferred from homology"/>
<feature type="chain" id="PRO_1000214520" description="Large ribosomal subunit protein uL3">
    <location>
        <begin position="1"/>
        <end position="208"/>
    </location>
</feature>
<feature type="region of interest" description="Disordered" evidence="2">
    <location>
        <begin position="117"/>
        <end position="147"/>
    </location>
</feature>